<gene>
    <name type="primary">OR1A1</name>
</gene>
<organism>
    <name type="scientific">Gorilla gorilla gorilla</name>
    <name type="common">Western lowland gorilla</name>
    <dbReference type="NCBI Taxonomy" id="9595"/>
    <lineage>
        <taxon>Eukaryota</taxon>
        <taxon>Metazoa</taxon>
        <taxon>Chordata</taxon>
        <taxon>Craniata</taxon>
        <taxon>Vertebrata</taxon>
        <taxon>Euteleostomi</taxon>
        <taxon>Mammalia</taxon>
        <taxon>Eutheria</taxon>
        <taxon>Euarchontoglires</taxon>
        <taxon>Primates</taxon>
        <taxon>Haplorrhini</taxon>
        <taxon>Catarrhini</taxon>
        <taxon>Hominidae</taxon>
        <taxon>Gorilla</taxon>
    </lineage>
</organism>
<feature type="chain" id="PRO_0000150413" description="Olfactory receptor 1A1">
    <location>
        <begin position="1"/>
        <end position="309"/>
    </location>
</feature>
<feature type="topological domain" description="Extracellular" evidence="1">
    <location>
        <begin position="1"/>
        <end position="25"/>
    </location>
</feature>
<feature type="transmembrane region" description="Helical; Name=1" evidence="1">
    <location>
        <begin position="26"/>
        <end position="49"/>
    </location>
</feature>
<feature type="topological domain" description="Cytoplasmic" evidence="1">
    <location>
        <begin position="50"/>
        <end position="57"/>
    </location>
</feature>
<feature type="transmembrane region" description="Helical; Name=2" evidence="1">
    <location>
        <begin position="58"/>
        <end position="79"/>
    </location>
</feature>
<feature type="topological domain" description="Extracellular" evidence="1">
    <location>
        <begin position="80"/>
        <end position="100"/>
    </location>
</feature>
<feature type="transmembrane region" description="Helical; Name=3" evidence="1">
    <location>
        <begin position="101"/>
        <end position="120"/>
    </location>
</feature>
<feature type="topological domain" description="Cytoplasmic" evidence="1">
    <location>
        <begin position="121"/>
        <end position="139"/>
    </location>
</feature>
<feature type="transmembrane region" description="Helical; Name=4" evidence="1">
    <location>
        <begin position="140"/>
        <end position="158"/>
    </location>
</feature>
<feature type="topological domain" description="Extracellular" evidence="1">
    <location>
        <begin position="159"/>
        <end position="195"/>
    </location>
</feature>
<feature type="transmembrane region" description="Helical; Name=5" evidence="1">
    <location>
        <begin position="196"/>
        <end position="218"/>
    </location>
</feature>
<feature type="topological domain" description="Cytoplasmic" evidence="1">
    <location>
        <begin position="219"/>
        <end position="235"/>
    </location>
</feature>
<feature type="transmembrane region" description="Helical; Name=6" evidence="1">
    <location>
        <begin position="236"/>
        <end position="258"/>
    </location>
</feature>
<feature type="topological domain" description="Extracellular" evidence="1">
    <location>
        <begin position="259"/>
        <end position="270"/>
    </location>
</feature>
<feature type="transmembrane region" description="Helical; Name=7" evidence="1">
    <location>
        <begin position="271"/>
        <end position="290"/>
    </location>
</feature>
<feature type="topological domain" description="Cytoplasmic" evidence="1">
    <location>
        <begin position="291"/>
        <end position="309"/>
    </location>
</feature>
<feature type="glycosylation site" description="N-linked (GlcNAc...) asparagine" evidence="1">
    <location>
        <position position="5"/>
    </location>
</feature>
<feature type="glycosylation site" description="N-linked (GlcNAc...) asparagine" evidence="1">
    <location>
        <position position="264"/>
    </location>
</feature>
<feature type="disulfide bond" evidence="2">
    <location>
        <begin position="97"/>
        <end position="189"/>
    </location>
</feature>
<comment type="function">
    <text evidence="3">Odorant receptor.</text>
</comment>
<comment type="subcellular location">
    <subcellularLocation>
        <location>Cell membrane</location>
        <topology>Multi-pass membrane protein</topology>
    </subcellularLocation>
</comment>
<comment type="similarity">
    <text evidence="2">Belongs to the G-protein coupled receptor 1 family.</text>
</comment>
<reference key="1">
    <citation type="journal article" date="1999" name="Genomics">
        <title>Primate evolution of an olfactory receptor cluster: diversification by gene conversion and recent emergence of pseudogenes.</title>
        <authorList>
            <person name="Sharon D."/>
            <person name="Glusman G."/>
            <person name="Pilpel Y."/>
            <person name="Khen M."/>
            <person name="Gruetzner F."/>
            <person name="Haaf T."/>
            <person name="Lancet D."/>
        </authorList>
    </citation>
    <scope>NUCLEOTIDE SEQUENCE [GENOMIC DNA]</scope>
</reference>
<proteinExistence type="inferred from homology"/>
<sequence>MRENNQSSTLEFILLGVTGQQEQEDFFYILFLFIYPITLIGNLLIVLAICSDVHLHNPMYFLLANLSLVDIFFSSVTIPKMLANHLSGSKSISFGGCLTQMYFMIDLGNTDSYTLAAMAYDRAVAISRPLHYTTIMSPRSCIWLIAGSWVIGNANALPHTLLTASLSFCGNQEVANFYCDITPLLKLSCSDIHFHVKMMYLGVGIFSVPLLCIIVSYIRVFSTVFQVPSTKGVLKAFSTCGSHLTVVSLYYGTVMGMYFRPLTNYSLKDAVITVMCTAVTPMLNPFIYSLRNRDMKAALQKLFNKRISS</sequence>
<protein>
    <recommendedName>
        <fullName>Olfactory receptor 1A1</fullName>
    </recommendedName>
</protein>
<name>OR1A1_GORGO</name>
<accession>Q9TU92</accession>
<dbReference type="EMBL" id="AF101751">
    <property type="protein sequence ID" value="AAF03332.1"/>
    <property type="molecule type" value="Genomic_DNA"/>
</dbReference>
<dbReference type="SMR" id="Q9TU92"/>
<dbReference type="FunCoup" id="Q9TU92">
    <property type="interactions" value="314"/>
</dbReference>
<dbReference type="STRING" id="9593.ENSGGOP00000020226"/>
<dbReference type="GlyCosmos" id="Q9TU92">
    <property type="glycosylation" value="2 sites, No reported glycans"/>
</dbReference>
<dbReference type="eggNOG" id="ENOG502TF5D">
    <property type="taxonomic scope" value="Eukaryota"/>
</dbReference>
<dbReference type="InParanoid" id="Q9TU92"/>
<dbReference type="Proteomes" id="UP000001519">
    <property type="component" value="Unplaced"/>
</dbReference>
<dbReference type="GO" id="GO:0005886">
    <property type="term" value="C:plasma membrane"/>
    <property type="evidence" value="ECO:0000318"/>
    <property type="project" value="GO_Central"/>
</dbReference>
<dbReference type="GO" id="GO:0004930">
    <property type="term" value="F:G protein-coupled receptor activity"/>
    <property type="evidence" value="ECO:0007669"/>
    <property type="project" value="UniProtKB-KW"/>
</dbReference>
<dbReference type="GO" id="GO:0004984">
    <property type="term" value="F:olfactory receptor activity"/>
    <property type="evidence" value="ECO:0000318"/>
    <property type="project" value="GO_Central"/>
</dbReference>
<dbReference type="GO" id="GO:0050911">
    <property type="term" value="P:detection of chemical stimulus involved in sensory perception of smell"/>
    <property type="evidence" value="ECO:0000318"/>
    <property type="project" value="GO_Central"/>
</dbReference>
<dbReference type="CDD" id="cd15918">
    <property type="entry name" value="7tmA_OR1_7-like"/>
    <property type="match status" value="1"/>
</dbReference>
<dbReference type="FunFam" id="1.10.1220.70:FF:000001">
    <property type="entry name" value="Olfactory receptor"/>
    <property type="match status" value="1"/>
</dbReference>
<dbReference type="FunFam" id="1.20.1070.10:FF:000082">
    <property type="entry name" value="Olfactory receptor 1A1"/>
    <property type="match status" value="1"/>
</dbReference>
<dbReference type="Gene3D" id="1.20.1070.10">
    <property type="entry name" value="Rhodopsin 7-helix transmembrane proteins"/>
    <property type="match status" value="1"/>
</dbReference>
<dbReference type="InterPro" id="IPR000276">
    <property type="entry name" value="GPCR_Rhodpsn"/>
</dbReference>
<dbReference type="InterPro" id="IPR017452">
    <property type="entry name" value="GPCR_Rhodpsn_7TM"/>
</dbReference>
<dbReference type="InterPro" id="IPR000725">
    <property type="entry name" value="Olfact_rcpt"/>
</dbReference>
<dbReference type="PANTHER" id="PTHR48001">
    <property type="entry name" value="OLFACTORY RECEPTOR"/>
    <property type="match status" value="1"/>
</dbReference>
<dbReference type="Pfam" id="PF13853">
    <property type="entry name" value="7tm_4"/>
    <property type="match status" value="1"/>
</dbReference>
<dbReference type="PRINTS" id="PR00237">
    <property type="entry name" value="GPCRRHODOPSN"/>
</dbReference>
<dbReference type="PRINTS" id="PR00245">
    <property type="entry name" value="OLFACTORYR"/>
</dbReference>
<dbReference type="SUPFAM" id="SSF81321">
    <property type="entry name" value="Family A G protein-coupled receptor-like"/>
    <property type="match status" value="1"/>
</dbReference>
<dbReference type="PROSITE" id="PS50262">
    <property type="entry name" value="G_PROTEIN_RECEP_F1_2"/>
    <property type="match status" value="1"/>
</dbReference>
<keyword id="KW-1003">Cell membrane</keyword>
<keyword id="KW-1015">Disulfide bond</keyword>
<keyword id="KW-0297">G-protein coupled receptor</keyword>
<keyword id="KW-0325">Glycoprotein</keyword>
<keyword id="KW-0472">Membrane</keyword>
<keyword id="KW-0552">Olfaction</keyword>
<keyword id="KW-0675">Receptor</keyword>
<keyword id="KW-1185">Reference proteome</keyword>
<keyword id="KW-0716">Sensory transduction</keyword>
<keyword id="KW-0807">Transducer</keyword>
<keyword id="KW-0812">Transmembrane</keyword>
<keyword id="KW-1133">Transmembrane helix</keyword>
<evidence type="ECO:0000255" key="1"/>
<evidence type="ECO:0000255" key="2">
    <source>
        <dbReference type="PROSITE-ProRule" id="PRU00521"/>
    </source>
</evidence>
<evidence type="ECO:0000305" key="3"/>